<dbReference type="EMBL" id="AL162873">
    <property type="protein sequence ID" value="CAB85517.1"/>
    <property type="status" value="ALT_SEQ"/>
    <property type="molecule type" value="Genomic_DNA"/>
</dbReference>
<dbReference type="EMBL" id="CP002688">
    <property type="protein sequence ID" value="AED90677.1"/>
    <property type="molecule type" value="Genomic_DNA"/>
</dbReference>
<dbReference type="EMBL" id="AY050339">
    <property type="protein sequence ID" value="AAK91356.1"/>
    <property type="molecule type" value="mRNA"/>
</dbReference>
<dbReference type="EMBL" id="BT000481">
    <property type="protein sequence ID" value="AAN18050.1"/>
    <property type="molecule type" value="mRNA"/>
</dbReference>
<dbReference type="PIR" id="T48424">
    <property type="entry name" value="T48424"/>
</dbReference>
<dbReference type="RefSeq" id="NP_568131.1">
    <molecule id="Q94A64-1"/>
    <property type="nucleotide sequence ID" value="NM_120479.2"/>
</dbReference>
<dbReference type="BioGRID" id="15556">
    <property type="interactions" value="11"/>
</dbReference>
<dbReference type="FunCoup" id="Q94A64">
    <property type="interactions" value="194"/>
</dbReference>
<dbReference type="IntAct" id="Q94A64">
    <property type="interactions" value="4"/>
</dbReference>
<dbReference type="STRING" id="3702.Q94A64"/>
<dbReference type="PaxDb" id="3702-AT5G03970.1"/>
<dbReference type="ProteomicsDB" id="222401">
    <molecule id="Q94A64-1"/>
</dbReference>
<dbReference type="EnsemblPlants" id="AT5G03970.1">
    <molecule id="Q94A64-1"/>
    <property type="protein sequence ID" value="AT5G03970.1"/>
    <property type="gene ID" value="AT5G03970"/>
</dbReference>
<dbReference type="GeneID" id="830276"/>
<dbReference type="Gramene" id="AT5G03970.1">
    <molecule id="Q94A64-1"/>
    <property type="protein sequence ID" value="AT5G03970.1"/>
    <property type="gene ID" value="AT5G03970"/>
</dbReference>
<dbReference type="KEGG" id="ath:AT5G03970"/>
<dbReference type="Araport" id="AT5G03970"/>
<dbReference type="TAIR" id="AT5G03970"/>
<dbReference type="eggNOG" id="ENOG502R8CU">
    <property type="taxonomic scope" value="Eukaryota"/>
</dbReference>
<dbReference type="InParanoid" id="Q94A64"/>
<dbReference type="OMA" id="DVQHFEV"/>
<dbReference type="PhylomeDB" id="Q94A64"/>
<dbReference type="PRO" id="PR:Q94A64"/>
<dbReference type="Proteomes" id="UP000006548">
    <property type="component" value="Chromosome 5"/>
</dbReference>
<dbReference type="ExpressionAtlas" id="Q94A64">
    <property type="expression patterns" value="baseline and differential"/>
</dbReference>
<dbReference type="InterPro" id="IPR056592">
    <property type="entry name" value="At3g26010-like_b-prop"/>
</dbReference>
<dbReference type="InterPro" id="IPR017451">
    <property type="entry name" value="F-box-assoc_interact_dom"/>
</dbReference>
<dbReference type="InterPro" id="IPR036047">
    <property type="entry name" value="F-box-like_dom_sf"/>
</dbReference>
<dbReference type="InterPro" id="IPR050796">
    <property type="entry name" value="SCF_F-box_component"/>
</dbReference>
<dbReference type="NCBIfam" id="TIGR01640">
    <property type="entry name" value="F_box_assoc_1"/>
    <property type="match status" value="1"/>
</dbReference>
<dbReference type="PANTHER" id="PTHR31672">
    <property type="entry name" value="BNACNNG10540D PROTEIN"/>
    <property type="match status" value="1"/>
</dbReference>
<dbReference type="PANTHER" id="PTHR31672:SF9">
    <property type="entry name" value="F-BOX DOMAIN-CONTAINING PROTEIN"/>
    <property type="match status" value="1"/>
</dbReference>
<dbReference type="Pfam" id="PF24750">
    <property type="entry name" value="b-prop_At3g26010-like"/>
    <property type="match status" value="1"/>
</dbReference>
<dbReference type="SUPFAM" id="SSF81383">
    <property type="entry name" value="F-box domain"/>
    <property type="match status" value="1"/>
</dbReference>
<organism>
    <name type="scientific">Arabidopsis thaliana</name>
    <name type="common">Mouse-ear cress</name>
    <dbReference type="NCBI Taxonomy" id="3702"/>
    <lineage>
        <taxon>Eukaryota</taxon>
        <taxon>Viridiplantae</taxon>
        <taxon>Streptophyta</taxon>
        <taxon>Embryophyta</taxon>
        <taxon>Tracheophyta</taxon>
        <taxon>Spermatophyta</taxon>
        <taxon>Magnoliopsida</taxon>
        <taxon>eudicotyledons</taxon>
        <taxon>Gunneridae</taxon>
        <taxon>Pentapetalae</taxon>
        <taxon>rosids</taxon>
        <taxon>malvids</taxon>
        <taxon>Brassicales</taxon>
        <taxon>Brassicaceae</taxon>
        <taxon>Camelineae</taxon>
        <taxon>Arabidopsis</taxon>
    </lineage>
</organism>
<proteinExistence type="evidence at transcript level"/>
<sequence>MSCSARLKTNLGMTSALSTHEVLNSNDTMCEILILLPPETIYKLILVSKRWLEIIASPCFRHTYLAKWKPNFELIGFFVCSSMYLGRRIDGTRRPRAEPSLPLLSTSSIGDEIESSGILKKLGYYIDSADGLLLCGRHPKAYYLWDPSTQKQQQLPRPRVHFEELCMSLISEDSPDQGFSYKVVRAECVAFPVNSTKVKVETFSSKTSTWSYSELICLEPLSLSPWTPGRVIKGVVYWHARGGKIAIYDSNSEEKRIDVIKLPKTYDYDEQVLGETDDGSLQYGWSNKSVMEVWKLEKVGNVLEWNLLFKVNFKAMWKMNQAVATRFSTWTKETQLLALFNQKSDLVYIRCDTQIFIYHTETKRVEVVQYQGRKSTLVWDFNKVVPYFRRTWPCSPLFENNAMMIDTPQCNASSAGSN</sequence>
<accession>Q94A64</accession>
<accession>Q2V3A3</accession>
<accession>Q9LZB3</accession>
<feature type="chain" id="PRO_0000283518" description="F-box protein At5g03970">
    <location>
        <begin position="1"/>
        <end position="418"/>
    </location>
</feature>
<feature type="domain" description="F-box">
    <location>
        <begin position="18"/>
        <end position="66"/>
    </location>
</feature>
<feature type="splice variant" id="VSP_024321" description="In isoform 2." evidence="1">
    <original>MSCSA</original>
    <variation>MVVQRSSSP</variation>
    <location>
        <begin position="1"/>
        <end position="5"/>
    </location>
</feature>
<gene>
    <name type="ordered locus">At5g03970</name>
    <name type="ORF">F8F6.180</name>
</gene>
<name>FB251_ARATH</name>
<evidence type="ECO:0000305" key="1"/>
<protein>
    <recommendedName>
        <fullName>F-box protein At5g03970</fullName>
    </recommendedName>
</protein>
<reference key="1">
    <citation type="journal article" date="2000" name="Nature">
        <title>Sequence and analysis of chromosome 5 of the plant Arabidopsis thaliana.</title>
        <authorList>
            <person name="Tabata S."/>
            <person name="Kaneko T."/>
            <person name="Nakamura Y."/>
            <person name="Kotani H."/>
            <person name="Kato T."/>
            <person name="Asamizu E."/>
            <person name="Miyajima N."/>
            <person name="Sasamoto S."/>
            <person name="Kimura T."/>
            <person name="Hosouchi T."/>
            <person name="Kawashima K."/>
            <person name="Kohara M."/>
            <person name="Matsumoto M."/>
            <person name="Matsuno A."/>
            <person name="Muraki A."/>
            <person name="Nakayama S."/>
            <person name="Nakazaki N."/>
            <person name="Naruo K."/>
            <person name="Okumura S."/>
            <person name="Shinpo S."/>
            <person name="Takeuchi C."/>
            <person name="Wada T."/>
            <person name="Watanabe A."/>
            <person name="Yamada M."/>
            <person name="Yasuda M."/>
            <person name="Sato S."/>
            <person name="de la Bastide M."/>
            <person name="Huang E."/>
            <person name="Spiegel L."/>
            <person name="Gnoj L."/>
            <person name="O'Shaughnessy A."/>
            <person name="Preston R."/>
            <person name="Habermann K."/>
            <person name="Murray J."/>
            <person name="Johnson D."/>
            <person name="Rohlfing T."/>
            <person name="Nelson J."/>
            <person name="Stoneking T."/>
            <person name="Pepin K."/>
            <person name="Spieth J."/>
            <person name="Sekhon M."/>
            <person name="Armstrong J."/>
            <person name="Becker M."/>
            <person name="Belter E."/>
            <person name="Cordum H."/>
            <person name="Cordes M."/>
            <person name="Courtney L."/>
            <person name="Courtney W."/>
            <person name="Dante M."/>
            <person name="Du H."/>
            <person name="Edwards J."/>
            <person name="Fryman J."/>
            <person name="Haakensen B."/>
            <person name="Lamar E."/>
            <person name="Latreille P."/>
            <person name="Leonard S."/>
            <person name="Meyer R."/>
            <person name="Mulvaney E."/>
            <person name="Ozersky P."/>
            <person name="Riley A."/>
            <person name="Strowmatt C."/>
            <person name="Wagner-McPherson C."/>
            <person name="Wollam A."/>
            <person name="Yoakum M."/>
            <person name="Bell M."/>
            <person name="Dedhia N."/>
            <person name="Parnell L."/>
            <person name="Shah R."/>
            <person name="Rodriguez M."/>
            <person name="Hoon See L."/>
            <person name="Vil D."/>
            <person name="Baker J."/>
            <person name="Kirchoff K."/>
            <person name="Toth K."/>
            <person name="King L."/>
            <person name="Bahret A."/>
            <person name="Miller B."/>
            <person name="Marra M.A."/>
            <person name="Martienssen R."/>
            <person name="McCombie W.R."/>
            <person name="Wilson R.K."/>
            <person name="Murphy G."/>
            <person name="Bancroft I."/>
            <person name="Volckaert G."/>
            <person name="Wambutt R."/>
            <person name="Duesterhoeft A."/>
            <person name="Stiekema W."/>
            <person name="Pohl T."/>
            <person name="Entian K.-D."/>
            <person name="Terryn N."/>
            <person name="Hartley N."/>
            <person name="Bent E."/>
            <person name="Johnson S."/>
            <person name="Langham S.-A."/>
            <person name="McCullagh B."/>
            <person name="Robben J."/>
            <person name="Grymonprez B."/>
            <person name="Zimmermann W."/>
            <person name="Ramsperger U."/>
            <person name="Wedler H."/>
            <person name="Balke K."/>
            <person name="Wedler E."/>
            <person name="Peters S."/>
            <person name="van Staveren M."/>
            <person name="Dirkse W."/>
            <person name="Mooijman P."/>
            <person name="Klein Lankhorst R."/>
            <person name="Weitzenegger T."/>
            <person name="Bothe G."/>
            <person name="Rose M."/>
            <person name="Hauf J."/>
            <person name="Berneiser S."/>
            <person name="Hempel S."/>
            <person name="Feldpausch M."/>
            <person name="Lamberth S."/>
            <person name="Villarroel R."/>
            <person name="Gielen J."/>
            <person name="Ardiles W."/>
            <person name="Bents O."/>
            <person name="Lemcke K."/>
            <person name="Kolesov G."/>
            <person name="Mayer K.F.X."/>
            <person name="Rudd S."/>
            <person name="Schoof H."/>
            <person name="Schueller C."/>
            <person name="Zaccaria P."/>
            <person name="Mewes H.-W."/>
            <person name="Bevan M."/>
            <person name="Fransz P.F."/>
        </authorList>
    </citation>
    <scope>NUCLEOTIDE SEQUENCE [LARGE SCALE GENOMIC DNA]</scope>
    <source>
        <strain>cv. Columbia</strain>
    </source>
</reference>
<reference key="2">
    <citation type="journal article" date="2017" name="Plant J.">
        <title>Araport11: a complete reannotation of the Arabidopsis thaliana reference genome.</title>
        <authorList>
            <person name="Cheng C.Y."/>
            <person name="Krishnakumar V."/>
            <person name="Chan A.P."/>
            <person name="Thibaud-Nissen F."/>
            <person name="Schobel S."/>
            <person name="Town C.D."/>
        </authorList>
    </citation>
    <scope>GENOME REANNOTATION</scope>
    <source>
        <strain>cv. Columbia</strain>
    </source>
</reference>
<reference key="3">
    <citation type="journal article" date="2003" name="Science">
        <title>Empirical analysis of transcriptional activity in the Arabidopsis genome.</title>
        <authorList>
            <person name="Yamada K."/>
            <person name="Lim J."/>
            <person name="Dale J.M."/>
            <person name="Chen H."/>
            <person name="Shinn P."/>
            <person name="Palm C.J."/>
            <person name="Southwick A.M."/>
            <person name="Wu H.C."/>
            <person name="Kim C.J."/>
            <person name="Nguyen M."/>
            <person name="Pham P.K."/>
            <person name="Cheuk R.F."/>
            <person name="Karlin-Newmann G."/>
            <person name="Liu S.X."/>
            <person name="Lam B."/>
            <person name="Sakano H."/>
            <person name="Wu T."/>
            <person name="Yu G."/>
            <person name="Miranda M."/>
            <person name="Quach H.L."/>
            <person name="Tripp M."/>
            <person name="Chang C.H."/>
            <person name="Lee J.M."/>
            <person name="Toriumi M.J."/>
            <person name="Chan M.M."/>
            <person name="Tang C.C."/>
            <person name="Onodera C.S."/>
            <person name="Deng J.M."/>
            <person name="Akiyama K."/>
            <person name="Ansari Y."/>
            <person name="Arakawa T."/>
            <person name="Banh J."/>
            <person name="Banno F."/>
            <person name="Bowser L."/>
            <person name="Brooks S.Y."/>
            <person name="Carninci P."/>
            <person name="Chao Q."/>
            <person name="Choy N."/>
            <person name="Enju A."/>
            <person name="Goldsmith A.D."/>
            <person name="Gurjal M."/>
            <person name="Hansen N.F."/>
            <person name="Hayashizaki Y."/>
            <person name="Johnson-Hopson C."/>
            <person name="Hsuan V.W."/>
            <person name="Iida K."/>
            <person name="Karnes M."/>
            <person name="Khan S."/>
            <person name="Koesema E."/>
            <person name="Ishida J."/>
            <person name="Jiang P.X."/>
            <person name="Jones T."/>
            <person name="Kawai J."/>
            <person name="Kamiya A."/>
            <person name="Meyers C."/>
            <person name="Nakajima M."/>
            <person name="Narusaka M."/>
            <person name="Seki M."/>
            <person name="Sakurai T."/>
            <person name="Satou M."/>
            <person name="Tamse R."/>
            <person name="Vaysberg M."/>
            <person name="Wallender E.K."/>
            <person name="Wong C."/>
            <person name="Yamamura Y."/>
            <person name="Yuan S."/>
            <person name="Shinozaki K."/>
            <person name="Davis R.W."/>
            <person name="Theologis A."/>
            <person name="Ecker J.R."/>
        </authorList>
    </citation>
    <scope>NUCLEOTIDE SEQUENCE [LARGE SCALE MRNA] (ISOFORM 1)</scope>
    <source>
        <strain>cv. Columbia</strain>
    </source>
</reference>
<keyword id="KW-0025">Alternative splicing</keyword>
<keyword id="KW-1185">Reference proteome</keyword>
<comment type="alternative products">
    <event type="alternative splicing"/>
    <isoform>
        <id>Q94A64-1</id>
        <name>1</name>
        <sequence type="displayed"/>
    </isoform>
    <isoform>
        <id>Q94A64-2</id>
        <name>2</name>
        <sequence type="described" ref="VSP_024321"/>
    </isoform>
</comment>
<comment type="sequence caution" evidence="1">
    <conflict type="erroneous gene model prediction">
        <sequence resource="EMBL-CDS" id="CAB85517"/>
    </conflict>
</comment>